<comment type="catalytic activity">
    <reaction>
        <text>L-glutamate + acetyl-CoA = N-acetyl-L-glutamate + CoA + H(+)</text>
        <dbReference type="Rhea" id="RHEA:24292"/>
        <dbReference type="ChEBI" id="CHEBI:15378"/>
        <dbReference type="ChEBI" id="CHEBI:29985"/>
        <dbReference type="ChEBI" id="CHEBI:44337"/>
        <dbReference type="ChEBI" id="CHEBI:57287"/>
        <dbReference type="ChEBI" id="CHEBI:57288"/>
        <dbReference type="EC" id="2.3.1.1"/>
    </reaction>
</comment>
<comment type="pathway">
    <text>Amino-acid biosynthesis; L-arginine biosynthesis; N(2)-acetyl-L-ornithine from L-glutamate: step 1/4.</text>
</comment>
<comment type="subunit">
    <text evidence="1">Homohexamer.</text>
</comment>
<comment type="subcellular location">
    <subcellularLocation>
        <location evidence="1">Cytoplasm</location>
    </subcellularLocation>
</comment>
<comment type="similarity">
    <text evidence="2">Belongs to the acetyltransferase family. ArgA subfamily.</text>
</comment>
<dbReference type="EC" id="2.3.1.1"/>
<dbReference type="EMBL" id="AE006468">
    <property type="protein sequence ID" value="AAL21868.1"/>
    <property type="molecule type" value="Genomic_DNA"/>
</dbReference>
<dbReference type="PIR" id="S12388">
    <property type="entry name" value="S12388"/>
</dbReference>
<dbReference type="RefSeq" id="NP_461909.1">
    <property type="nucleotide sequence ID" value="NC_003197.2"/>
</dbReference>
<dbReference type="RefSeq" id="WP_000588964.1">
    <property type="nucleotide sequence ID" value="NC_003197.2"/>
</dbReference>
<dbReference type="SMR" id="Q8ZMB8"/>
<dbReference type="STRING" id="99287.STM2992"/>
<dbReference type="PaxDb" id="99287-STM2992"/>
<dbReference type="GeneID" id="1254515"/>
<dbReference type="KEGG" id="stm:STM2992"/>
<dbReference type="PATRIC" id="fig|99287.12.peg.3166"/>
<dbReference type="HOGENOM" id="CLU_024773_0_0_6"/>
<dbReference type="OMA" id="KRKYNWD"/>
<dbReference type="PhylomeDB" id="Q8ZMB8"/>
<dbReference type="BioCyc" id="SENT99287:STM2992-MONOMER"/>
<dbReference type="UniPathway" id="UPA00068">
    <property type="reaction ID" value="UER00106"/>
</dbReference>
<dbReference type="Proteomes" id="UP000001014">
    <property type="component" value="Chromosome"/>
</dbReference>
<dbReference type="GO" id="GO:0005737">
    <property type="term" value="C:cytoplasm"/>
    <property type="evidence" value="ECO:0007669"/>
    <property type="project" value="UniProtKB-SubCell"/>
</dbReference>
<dbReference type="GO" id="GO:0004042">
    <property type="term" value="F:L-glutamate N-acetyltransferase activity"/>
    <property type="evidence" value="ECO:0007669"/>
    <property type="project" value="UniProtKB-UniRule"/>
</dbReference>
<dbReference type="GO" id="GO:0006526">
    <property type="term" value="P:L-arginine biosynthetic process"/>
    <property type="evidence" value="ECO:0007669"/>
    <property type="project" value="UniProtKB-UniRule"/>
</dbReference>
<dbReference type="CDD" id="cd04237">
    <property type="entry name" value="AAK_NAGS-ABP"/>
    <property type="match status" value="1"/>
</dbReference>
<dbReference type="CDD" id="cd04301">
    <property type="entry name" value="NAT_SF"/>
    <property type="match status" value="1"/>
</dbReference>
<dbReference type="FunFam" id="3.40.1160.10:FF:000005">
    <property type="entry name" value="Amino-acid acetyltransferase"/>
    <property type="match status" value="1"/>
</dbReference>
<dbReference type="FunFam" id="3.40.630.30:FF:000009">
    <property type="entry name" value="Amino-acid acetyltransferase"/>
    <property type="match status" value="1"/>
</dbReference>
<dbReference type="Gene3D" id="3.40.630.30">
    <property type="match status" value="1"/>
</dbReference>
<dbReference type="Gene3D" id="3.40.1160.10">
    <property type="entry name" value="Acetylglutamate kinase-like"/>
    <property type="match status" value="1"/>
</dbReference>
<dbReference type="HAMAP" id="MF_01105">
    <property type="entry name" value="N_acetyl_glu_synth"/>
    <property type="match status" value="1"/>
</dbReference>
<dbReference type="InterPro" id="IPR036393">
    <property type="entry name" value="AceGlu_kinase-like_sf"/>
</dbReference>
<dbReference type="InterPro" id="IPR016181">
    <property type="entry name" value="Acyl_CoA_acyltransferase"/>
</dbReference>
<dbReference type="InterPro" id="IPR001048">
    <property type="entry name" value="Asp/Glu/Uridylate_kinase"/>
</dbReference>
<dbReference type="InterPro" id="IPR000182">
    <property type="entry name" value="GNAT_dom"/>
</dbReference>
<dbReference type="InterPro" id="IPR033719">
    <property type="entry name" value="NAGS_kin"/>
</dbReference>
<dbReference type="InterPro" id="IPR010167">
    <property type="entry name" value="NH2A_AcTrfase"/>
</dbReference>
<dbReference type="NCBIfam" id="TIGR01890">
    <property type="entry name" value="N-Ac-Glu-synth"/>
    <property type="match status" value="1"/>
</dbReference>
<dbReference type="NCBIfam" id="NF003641">
    <property type="entry name" value="PRK05279.1"/>
    <property type="match status" value="1"/>
</dbReference>
<dbReference type="PANTHER" id="PTHR30602">
    <property type="entry name" value="AMINO-ACID ACETYLTRANSFERASE"/>
    <property type="match status" value="1"/>
</dbReference>
<dbReference type="PANTHER" id="PTHR30602:SF12">
    <property type="entry name" value="AMINO-ACID ACETYLTRANSFERASE NAGS1, CHLOROPLASTIC-RELATED"/>
    <property type="match status" value="1"/>
</dbReference>
<dbReference type="Pfam" id="PF00696">
    <property type="entry name" value="AA_kinase"/>
    <property type="match status" value="1"/>
</dbReference>
<dbReference type="Pfam" id="PF00583">
    <property type="entry name" value="Acetyltransf_1"/>
    <property type="match status" value="1"/>
</dbReference>
<dbReference type="PIRSF" id="PIRSF000423">
    <property type="entry name" value="ArgA"/>
    <property type="match status" value="1"/>
</dbReference>
<dbReference type="SUPFAM" id="SSF55729">
    <property type="entry name" value="Acyl-CoA N-acyltransferases (Nat)"/>
    <property type="match status" value="1"/>
</dbReference>
<dbReference type="SUPFAM" id="SSF53633">
    <property type="entry name" value="Carbamate kinase-like"/>
    <property type="match status" value="1"/>
</dbReference>
<dbReference type="PROSITE" id="PS51186">
    <property type="entry name" value="GNAT"/>
    <property type="match status" value="1"/>
</dbReference>
<keyword id="KW-0012">Acyltransferase</keyword>
<keyword id="KW-0028">Amino-acid biosynthesis</keyword>
<keyword id="KW-0055">Arginine biosynthesis</keyword>
<keyword id="KW-0963">Cytoplasm</keyword>
<keyword id="KW-1185">Reference proteome</keyword>
<keyword id="KW-0808">Transferase</keyword>
<accession>Q8ZMB8</accession>
<protein>
    <recommendedName>
        <fullName>Amino-acid acetyltransferase</fullName>
        <ecNumber>2.3.1.1</ecNumber>
    </recommendedName>
    <alternativeName>
        <fullName>N-acetylglutamate synthase</fullName>
        <shortName>AGS</shortName>
        <shortName>NAGS</shortName>
    </alternativeName>
</protein>
<organism>
    <name type="scientific">Salmonella typhimurium (strain LT2 / SGSC1412 / ATCC 700720)</name>
    <dbReference type="NCBI Taxonomy" id="99287"/>
    <lineage>
        <taxon>Bacteria</taxon>
        <taxon>Pseudomonadati</taxon>
        <taxon>Pseudomonadota</taxon>
        <taxon>Gammaproteobacteria</taxon>
        <taxon>Enterobacterales</taxon>
        <taxon>Enterobacteriaceae</taxon>
        <taxon>Salmonella</taxon>
    </lineage>
</organism>
<proteinExistence type="inferred from homology"/>
<gene>
    <name type="primary">argA</name>
    <name type="ordered locus">STM2992</name>
</gene>
<reference key="1">
    <citation type="journal article" date="2001" name="Nature">
        <title>Complete genome sequence of Salmonella enterica serovar Typhimurium LT2.</title>
        <authorList>
            <person name="McClelland M."/>
            <person name="Sanderson K.E."/>
            <person name="Spieth J."/>
            <person name="Clifton S.W."/>
            <person name="Latreille P."/>
            <person name="Courtney L."/>
            <person name="Porwollik S."/>
            <person name="Ali J."/>
            <person name="Dante M."/>
            <person name="Du F."/>
            <person name="Hou S."/>
            <person name="Layman D."/>
            <person name="Leonard S."/>
            <person name="Nguyen C."/>
            <person name="Scott K."/>
            <person name="Holmes A."/>
            <person name="Grewal N."/>
            <person name="Mulvaney E."/>
            <person name="Ryan E."/>
            <person name="Sun H."/>
            <person name="Florea L."/>
            <person name="Miller W."/>
            <person name="Stoneking T."/>
            <person name="Nhan M."/>
            <person name="Waterston R."/>
            <person name="Wilson R.K."/>
        </authorList>
    </citation>
    <scope>NUCLEOTIDE SEQUENCE [LARGE SCALE GENOMIC DNA]</scope>
    <source>
        <strain>LT2 / SGSC1412 / ATCC 700720</strain>
    </source>
</reference>
<name>ARGA_SALTY</name>
<evidence type="ECO:0000250" key="1"/>
<evidence type="ECO:0000305" key="2"/>
<feature type="chain" id="PRO_0000186805" description="Amino-acid acetyltransferase">
    <location>
        <begin position="1"/>
        <end position="443"/>
    </location>
</feature>
<feature type="domain" description="N-acetyltransferase">
    <location>
        <begin position="296"/>
        <end position="443"/>
    </location>
</feature>
<sequence length="443" mass="49278">MIKERKTELVEGFRHSVPYINTHRGKTFVIMLGGEAIEHDNFSSIVSDIGLLHSLGIRLVVVYGARPQIDANLAAHHHEPIYHKNTRVTDAKALELVKQAAGLLQLDITARLSMSLNNTPLQGAHINVVSGNFTIAQPLGVDDGVDYCHSGRIRRIDEDAINRQLDNGAIVLMGPVAVSVTGESFNLTSEEIATQLAVKLKAEKMIGFCSSQGVTNSEGGIISELFPNEAQARVEELEAQGDYNSGTVRFLRGAVKACRSGVRRCHLISYQEDGSLLQELFSRDGIGTQIVMESAEQIRRATINDIGGILELIRPLEQQGILVRRSREQLEMEIDKFTIIQRDNMTIACAALYPFVEEKIGEMACVAVHPDYRSSSRGEVLLERVAAQARQMGLRKLFVLTTRSIHWFQERGFTPVDIELLPESKKKMYNYQRRSKVLMADLG</sequence>